<comment type="function">
    <text evidence="1">Excises uracil residues from the DNA which can arise as a result of misincorporation of dUMP residues by DNA polymerase or due to deamination of cytosine.</text>
</comment>
<comment type="catalytic activity">
    <reaction evidence="1">
        <text>Hydrolyzes single-stranded DNA or mismatched double-stranded DNA and polynucleotides, releasing free uracil.</text>
        <dbReference type="EC" id="3.2.2.27"/>
    </reaction>
</comment>
<comment type="subcellular location">
    <subcellularLocation>
        <location evidence="1">Cytoplasm</location>
    </subcellularLocation>
</comment>
<comment type="similarity">
    <text evidence="1">Belongs to the uracil-DNA glycosylase (UDG) superfamily. UNG family.</text>
</comment>
<dbReference type="EC" id="3.2.2.27" evidence="1"/>
<dbReference type="EMBL" id="AL596167">
    <property type="protein sequence ID" value="CAC96421.1"/>
    <property type="molecule type" value="Genomic_DNA"/>
</dbReference>
<dbReference type="PIR" id="AE1581">
    <property type="entry name" value="AE1581"/>
</dbReference>
<dbReference type="RefSeq" id="WP_010990820.1">
    <property type="nucleotide sequence ID" value="NC_003212.1"/>
</dbReference>
<dbReference type="SMR" id="Q92CI1"/>
<dbReference type="STRING" id="272626.gene:17565520"/>
<dbReference type="GeneID" id="93234638"/>
<dbReference type="KEGG" id="lin:lin1190"/>
<dbReference type="eggNOG" id="COG0692">
    <property type="taxonomic scope" value="Bacteria"/>
</dbReference>
<dbReference type="HOGENOM" id="CLU_032162_3_0_9"/>
<dbReference type="OrthoDB" id="9804372at2"/>
<dbReference type="Proteomes" id="UP000002513">
    <property type="component" value="Chromosome"/>
</dbReference>
<dbReference type="GO" id="GO:0005737">
    <property type="term" value="C:cytoplasm"/>
    <property type="evidence" value="ECO:0007669"/>
    <property type="project" value="UniProtKB-SubCell"/>
</dbReference>
<dbReference type="GO" id="GO:0004844">
    <property type="term" value="F:uracil DNA N-glycosylase activity"/>
    <property type="evidence" value="ECO:0007669"/>
    <property type="project" value="UniProtKB-UniRule"/>
</dbReference>
<dbReference type="GO" id="GO:0097510">
    <property type="term" value="P:base-excision repair, AP site formation via deaminated base removal"/>
    <property type="evidence" value="ECO:0007669"/>
    <property type="project" value="TreeGrafter"/>
</dbReference>
<dbReference type="CDD" id="cd10027">
    <property type="entry name" value="UDG-F1-like"/>
    <property type="match status" value="1"/>
</dbReference>
<dbReference type="FunFam" id="3.40.470.10:FF:000001">
    <property type="entry name" value="Uracil-DNA glycosylase"/>
    <property type="match status" value="1"/>
</dbReference>
<dbReference type="Gene3D" id="3.40.470.10">
    <property type="entry name" value="Uracil-DNA glycosylase-like domain"/>
    <property type="match status" value="1"/>
</dbReference>
<dbReference type="HAMAP" id="MF_00148">
    <property type="entry name" value="UDG"/>
    <property type="match status" value="1"/>
</dbReference>
<dbReference type="InterPro" id="IPR002043">
    <property type="entry name" value="UDG_fam1"/>
</dbReference>
<dbReference type="InterPro" id="IPR018085">
    <property type="entry name" value="Ura-DNA_Glyclase_AS"/>
</dbReference>
<dbReference type="InterPro" id="IPR005122">
    <property type="entry name" value="Uracil-DNA_glycosylase-like"/>
</dbReference>
<dbReference type="InterPro" id="IPR036895">
    <property type="entry name" value="Uracil-DNA_glycosylase-like_sf"/>
</dbReference>
<dbReference type="NCBIfam" id="NF003588">
    <property type="entry name" value="PRK05254.1-1"/>
    <property type="match status" value="1"/>
</dbReference>
<dbReference type="NCBIfam" id="NF003589">
    <property type="entry name" value="PRK05254.1-2"/>
    <property type="match status" value="1"/>
</dbReference>
<dbReference type="NCBIfam" id="NF003591">
    <property type="entry name" value="PRK05254.1-4"/>
    <property type="match status" value="1"/>
</dbReference>
<dbReference type="NCBIfam" id="NF003592">
    <property type="entry name" value="PRK05254.1-5"/>
    <property type="match status" value="1"/>
</dbReference>
<dbReference type="NCBIfam" id="TIGR00628">
    <property type="entry name" value="ung"/>
    <property type="match status" value="1"/>
</dbReference>
<dbReference type="PANTHER" id="PTHR11264">
    <property type="entry name" value="URACIL-DNA GLYCOSYLASE"/>
    <property type="match status" value="1"/>
</dbReference>
<dbReference type="PANTHER" id="PTHR11264:SF0">
    <property type="entry name" value="URACIL-DNA GLYCOSYLASE"/>
    <property type="match status" value="1"/>
</dbReference>
<dbReference type="Pfam" id="PF03167">
    <property type="entry name" value="UDG"/>
    <property type="match status" value="1"/>
</dbReference>
<dbReference type="SMART" id="SM00986">
    <property type="entry name" value="UDG"/>
    <property type="match status" value="1"/>
</dbReference>
<dbReference type="SMART" id="SM00987">
    <property type="entry name" value="UreE_C"/>
    <property type="match status" value="1"/>
</dbReference>
<dbReference type="SUPFAM" id="SSF52141">
    <property type="entry name" value="Uracil-DNA glycosylase-like"/>
    <property type="match status" value="1"/>
</dbReference>
<dbReference type="PROSITE" id="PS00130">
    <property type="entry name" value="U_DNA_GLYCOSYLASE"/>
    <property type="match status" value="1"/>
</dbReference>
<gene>
    <name evidence="1" type="primary">ung2</name>
    <name type="ordered locus">lin1190</name>
</gene>
<feature type="chain" id="PRO_0000176110" description="Uracil-DNA glycosylase 2">
    <location>
        <begin position="1"/>
        <end position="224"/>
    </location>
</feature>
<feature type="active site" description="Proton acceptor" evidence="1">
    <location>
        <position position="64"/>
    </location>
</feature>
<organism>
    <name type="scientific">Listeria innocua serovar 6a (strain ATCC BAA-680 / CLIP 11262)</name>
    <dbReference type="NCBI Taxonomy" id="272626"/>
    <lineage>
        <taxon>Bacteria</taxon>
        <taxon>Bacillati</taxon>
        <taxon>Bacillota</taxon>
        <taxon>Bacilli</taxon>
        <taxon>Bacillales</taxon>
        <taxon>Listeriaceae</taxon>
        <taxon>Listeria</taxon>
    </lineage>
</organism>
<evidence type="ECO:0000255" key="1">
    <source>
        <dbReference type="HAMAP-Rule" id="MF_00148"/>
    </source>
</evidence>
<name>UNG2_LISIN</name>
<proteinExistence type="inferred from homology"/>
<keyword id="KW-0963">Cytoplasm</keyword>
<keyword id="KW-0227">DNA damage</keyword>
<keyword id="KW-0234">DNA repair</keyword>
<keyword id="KW-0378">Hydrolase</keyword>
<reference key="1">
    <citation type="journal article" date="2001" name="Science">
        <title>Comparative genomics of Listeria species.</title>
        <authorList>
            <person name="Glaser P."/>
            <person name="Frangeul L."/>
            <person name="Buchrieser C."/>
            <person name="Rusniok C."/>
            <person name="Amend A."/>
            <person name="Baquero F."/>
            <person name="Berche P."/>
            <person name="Bloecker H."/>
            <person name="Brandt P."/>
            <person name="Chakraborty T."/>
            <person name="Charbit A."/>
            <person name="Chetouani F."/>
            <person name="Couve E."/>
            <person name="de Daruvar A."/>
            <person name="Dehoux P."/>
            <person name="Domann E."/>
            <person name="Dominguez-Bernal G."/>
            <person name="Duchaud E."/>
            <person name="Durant L."/>
            <person name="Dussurget O."/>
            <person name="Entian K.-D."/>
            <person name="Fsihi H."/>
            <person name="Garcia-del Portillo F."/>
            <person name="Garrido P."/>
            <person name="Gautier L."/>
            <person name="Goebel W."/>
            <person name="Gomez-Lopez N."/>
            <person name="Hain T."/>
            <person name="Hauf J."/>
            <person name="Jackson D."/>
            <person name="Jones L.-M."/>
            <person name="Kaerst U."/>
            <person name="Kreft J."/>
            <person name="Kuhn M."/>
            <person name="Kunst F."/>
            <person name="Kurapkat G."/>
            <person name="Madueno E."/>
            <person name="Maitournam A."/>
            <person name="Mata Vicente J."/>
            <person name="Ng E."/>
            <person name="Nedjari H."/>
            <person name="Nordsiek G."/>
            <person name="Novella S."/>
            <person name="de Pablos B."/>
            <person name="Perez-Diaz J.-C."/>
            <person name="Purcell R."/>
            <person name="Remmel B."/>
            <person name="Rose M."/>
            <person name="Schlueter T."/>
            <person name="Simoes N."/>
            <person name="Tierrez A."/>
            <person name="Vazquez-Boland J.-A."/>
            <person name="Voss H."/>
            <person name="Wehland J."/>
            <person name="Cossart P."/>
        </authorList>
    </citation>
    <scope>NUCLEOTIDE SEQUENCE [LARGE SCALE GENOMIC DNA]</scope>
    <source>
        <strain>ATCC BAA-680 / CLIP 11262</strain>
    </source>
</reference>
<sequence length="224" mass="25790">MIKLENDWDELLKDEFNQPYYLKLRQFLKNEYQTKRIFPDMYDIFNALKHTAYKDVKVVILGQDPYHGPGQAHGLSFSVQKGVQIPPSLQNIYLELHNDLNCEIPNNGYLIPWADQGVLLLNTVLTVRAGQANSHRGQGWELLTNRIIEMINQKEEPVVFLLWGNNAKEKLQLLTNPKHIAFTSVHPSPLSASRGFMGCKHFSKTNHFLEQNGIKPIDWQIPSI</sequence>
<protein>
    <recommendedName>
        <fullName evidence="1">Uracil-DNA glycosylase 2</fullName>
        <shortName evidence="1">UDG 2</shortName>
        <ecNumber evidence="1">3.2.2.27</ecNumber>
    </recommendedName>
</protein>
<accession>Q92CI1</accession>